<dbReference type="EC" id="2.3.2.27" evidence="1"/>
<dbReference type="EMBL" id="AK131127">
    <property type="protein sequence ID" value="BAD21377.1"/>
    <property type="status" value="ALT_INIT"/>
    <property type="molecule type" value="mRNA"/>
</dbReference>
<dbReference type="EMBL" id="BC024690">
    <property type="protein sequence ID" value="AAH24690.1"/>
    <property type="molecule type" value="mRNA"/>
</dbReference>
<dbReference type="EMBL" id="BC050859">
    <property type="protein sequence ID" value="AAH50859.1"/>
    <property type="molecule type" value="mRNA"/>
</dbReference>
<dbReference type="CCDS" id="CCDS28490.1">
    <molecule id="Q80YR4-1"/>
</dbReference>
<dbReference type="CCDS" id="CCDS89013.1">
    <molecule id="Q80YR4-3"/>
</dbReference>
<dbReference type="RefSeq" id="NP_001335160.1">
    <molecule id="Q80YR4-3"/>
    <property type="nucleotide sequence ID" value="NM_001348231.1"/>
</dbReference>
<dbReference type="RefSeq" id="NP_898972.1">
    <molecule id="Q80YR4-1"/>
    <property type="nucleotide sequence ID" value="NM_183149.2"/>
</dbReference>
<dbReference type="RefSeq" id="XP_006524062.1">
    <property type="nucleotide sequence ID" value="XM_006523999.1"/>
</dbReference>
<dbReference type="BioGRID" id="229466">
    <property type="interactions" value="5"/>
</dbReference>
<dbReference type="FunCoup" id="Q80YR4">
    <property type="interactions" value="1312"/>
</dbReference>
<dbReference type="IntAct" id="Q80YR4">
    <property type="interactions" value="1"/>
</dbReference>
<dbReference type="MINT" id="Q80YR4"/>
<dbReference type="STRING" id="10090.ENSMUSP00000157172"/>
<dbReference type="GlyGen" id="Q80YR4">
    <property type="glycosylation" value="7 sites, 1 O-linked glycan (4 sites)"/>
</dbReference>
<dbReference type="iPTMnet" id="Q80YR4"/>
<dbReference type="PhosphoSitePlus" id="Q80YR4"/>
<dbReference type="SwissPalm" id="Q80YR4"/>
<dbReference type="PaxDb" id="10090-ENSMUSP00000038367"/>
<dbReference type="PeptideAtlas" id="Q80YR4"/>
<dbReference type="ProteomicsDB" id="302131">
    <molecule id="Q80YR4-1"/>
</dbReference>
<dbReference type="ProteomicsDB" id="302132">
    <molecule id="Q80YR4-2"/>
</dbReference>
<dbReference type="ProteomicsDB" id="302133">
    <molecule id="Q80YR4-3"/>
</dbReference>
<dbReference type="Pumba" id="Q80YR4"/>
<dbReference type="Antibodypedia" id="23428">
    <property type="antibodies" value="134 antibodies from 22 providers"/>
</dbReference>
<dbReference type="DNASU" id="213753"/>
<dbReference type="Ensembl" id="ENSMUST00000047179.7">
    <molecule id="Q80YR4-3"/>
    <property type="protein sequence ID" value="ENSMUSP00000038367.7"/>
    <property type="gene ID" value="ENSMUSG00000041130.11"/>
</dbReference>
<dbReference type="Ensembl" id="ENSMUST00000234956.2">
    <molecule id="Q80YR4-1"/>
    <property type="protein sequence ID" value="ENSMUSP00000157172.2"/>
    <property type="gene ID" value="ENSMUSG00000041130.11"/>
</dbReference>
<dbReference type="GeneID" id="213753"/>
<dbReference type="KEGG" id="mmu:213753"/>
<dbReference type="UCSC" id="uc008axn.1">
    <molecule id="Q80YR4-1"/>
    <property type="organism name" value="mouse"/>
</dbReference>
<dbReference type="UCSC" id="uc008axo.1">
    <molecule id="Q80YR4-2"/>
    <property type="organism name" value="mouse"/>
</dbReference>
<dbReference type="UCSC" id="uc008axp.1">
    <molecule id="Q80YR4-3"/>
    <property type="organism name" value="mouse"/>
</dbReference>
<dbReference type="AGR" id="MGI:2670965"/>
<dbReference type="CTD" id="213753"/>
<dbReference type="MGI" id="MGI:2670965">
    <property type="gene designation" value="Zfp598"/>
</dbReference>
<dbReference type="VEuPathDB" id="HostDB:ENSMUSG00000041130"/>
<dbReference type="eggNOG" id="KOG2231">
    <property type="taxonomic scope" value="Eukaryota"/>
</dbReference>
<dbReference type="GeneTree" id="ENSGT00390000014178"/>
<dbReference type="HOGENOM" id="CLU_015828_0_0_1"/>
<dbReference type="InParanoid" id="Q80YR4"/>
<dbReference type="OMA" id="CEKKYDI"/>
<dbReference type="OrthoDB" id="3838338at2759"/>
<dbReference type="PhylomeDB" id="Q80YR4"/>
<dbReference type="TreeFam" id="TF316196"/>
<dbReference type="UniPathway" id="UPA00143"/>
<dbReference type="BioGRID-ORCS" id="213753">
    <property type="hits" value="13 hits in 82 CRISPR screens"/>
</dbReference>
<dbReference type="ChiTaRS" id="Zfp598">
    <property type="organism name" value="mouse"/>
</dbReference>
<dbReference type="PRO" id="PR:Q80YR4"/>
<dbReference type="Proteomes" id="UP000000589">
    <property type="component" value="Chromosome 17"/>
</dbReference>
<dbReference type="RNAct" id="Q80YR4">
    <property type="molecule type" value="protein"/>
</dbReference>
<dbReference type="Bgee" id="ENSMUSG00000041130">
    <property type="expression patterns" value="Expressed in skin of snout and 263 other cell types or tissues"/>
</dbReference>
<dbReference type="GO" id="GO:0005829">
    <property type="term" value="C:cytosol"/>
    <property type="evidence" value="ECO:0000250"/>
    <property type="project" value="UniProtKB"/>
</dbReference>
<dbReference type="GO" id="GO:0043022">
    <property type="term" value="F:ribosome binding"/>
    <property type="evidence" value="ECO:0000250"/>
    <property type="project" value="UniProtKB"/>
</dbReference>
<dbReference type="GO" id="GO:0061630">
    <property type="term" value="F:ubiquitin protein ligase activity"/>
    <property type="evidence" value="ECO:0000250"/>
    <property type="project" value="UniProtKB"/>
</dbReference>
<dbReference type="GO" id="GO:0008270">
    <property type="term" value="F:zinc ion binding"/>
    <property type="evidence" value="ECO:0007669"/>
    <property type="project" value="UniProtKB-KW"/>
</dbReference>
<dbReference type="GO" id="GO:0070534">
    <property type="term" value="P:protein K63-linked ubiquitination"/>
    <property type="evidence" value="ECO:0000250"/>
    <property type="project" value="UniProtKB"/>
</dbReference>
<dbReference type="GO" id="GO:0006513">
    <property type="term" value="P:protein monoubiquitination"/>
    <property type="evidence" value="ECO:0000250"/>
    <property type="project" value="UniProtKB"/>
</dbReference>
<dbReference type="GO" id="GO:0016567">
    <property type="term" value="P:protein ubiquitination"/>
    <property type="evidence" value="ECO:0000250"/>
    <property type="project" value="UniProtKB"/>
</dbReference>
<dbReference type="GO" id="GO:0006417">
    <property type="term" value="P:regulation of translation"/>
    <property type="evidence" value="ECO:0007669"/>
    <property type="project" value="UniProtKB-KW"/>
</dbReference>
<dbReference type="GO" id="GO:0072344">
    <property type="term" value="P:rescue of stalled ribosome"/>
    <property type="evidence" value="ECO:0000250"/>
    <property type="project" value="UniProtKB"/>
</dbReference>
<dbReference type="GO" id="GO:1990116">
    <property type="term" value="P:ribosome-associated ubiquitin-dependent protein catabolic process"/>
    <property type="evidence" value="ECO:0000250"/>
    <property type="project" value="UniProtKB"/>
</dbReference>
<dbReference type="CDD" id="cd16615">
    <property type="entry name" value="RING-HC_ZNF598"/>
    <property type="match status" value="1"/>
</dbReference>
<dbReference type="InterPro" id="IPR041888">
    <property type="entry name" value="RING-HC_ZNF598/Hel2"/>
</dbReference>
<dbReference type="InterPro" id="IPR056437">
    <property type="entry name" value="Znf-C2H2_ZNF598/Hel2"/>
</dbReference>
<dbReference type="InterPro" id="IPR044288">
    <property type="entry name" value="ZNF598/Hel2"/>
</dbReference>
<dbReference type="InterPro" id="IPR013087">
    <property type="entry name" value="Znf_C2H2_type"/>
</dbReference>
<dbReference type="InterPro" id="IPR001841">
    <property type="entry name" value="Znf_RING"/>
</dbReference>
<dbReference type="PANTHER" id="PTHR22938:SF0">
    <property type="entry name" value="E3 UBIQUITIN-PROTEIN LIGASE ZNF598"/>
    <property type="match status" value="1"/>
</dbReference>
<dbReference type="PANTHER" id="PTHR22938">
    <property type="entry name" value="ZINC FINGER PROTEIN 598"/>
    <property type="match status" value="1"/>
</dbReference>
<dbReference type="Pfam" id="PF23202">
    <property type="entry name" value="PAH_ZNF598"/>
    <property type="match status" value="1"/>
</dbReference>
<dbReference type="Pfam" id="PF25447">
    <property type="entry name" value="RING_ZNF598"/>
    <property type="match status" value="1"/>
</dbReference>
<dbReference type="Pfam" id="PF23230">
    <property type="entry name" value="zf-C2H2_13"/>
    <property type="match status" value="1"/>
</dbReference>
<dbReference type="Pfam" id="PF23208">
    <property type="entry name" value="zf_C2H2_ZNF598"/>
    <property type="match status" value="1"/>
</dbReference>
<dbReference type="SMART" id="SM00355">
    <property type="entry name" value="ZnF_C2H2"/>
    <property type="match status" value="5"/>
</dbReference>
<dbReference type="PROSITE" id="PS50089">
    <property type="entry name" value="ZF_RING_2"/>
    <property type="match status" value="1"/>
</dbReference>
<dbReference type="PROSITE" id="PS00028">
    <property type="entry name" value="ZINC_FINGER_C2H2_1"/>
    <property type="match status" value="1"/>
</dbReference>
<reference key="1">
    <citation type="journal article" date="2004" name="DNA Res.">
        <title>Prediction of the coding sequences of mouse homologues of FLJ genes: the complete nucleotide sequences of 110 mouse FLJ-homologous cDNAs identified by screening of terminal sequences of cDNA clones randomly sampled from size-fractionated libraries.</title>
        <authorList>
            <person name="Okazaki N."/>
            <person name="Kikuno R."/>
            <person name="Ohara R."/>
            <person name="Inamoto S."/>
            <person name="Koseki H."/>
            <person name="Hiraoka S."/>
            <person name="Saga Y."/>
            <person name="Kitamura H."/>
            <person name="Nakagawa T."/>
            <person name="Nagase T."/>
            <person name="Ohara O."/>
            <person name="Koga H."/>
        </authorList>
    </citation>
    <scope>NUCLEOTIDE SEQUENCE [LARGE SCALE MRNA] (ISOFORM 2)</scope>
    <source>
        <tissue>Natural killer cell</tissue>
    </source>
</reference>
<reference key="2">
    <citation type="journal article" date="2004" name="Genome Res.">
        <title>The status, quality, and expansion of the NIH full-length cDNA project: the Mammalian Gene Collection (MGC).</title>
        <authorList>
            <consortium name="The MGC Project Team"/>
        </authorList>
    </citation>
    <scope>NUCLEOTIDE SEQUENCE [LARGE SCALE MRNA] (ISOFORM 1)</scope>
    <scope>NUCLEOTIDE SEQUENCE [LARGE SCALE MRNA] OF 68-908 (ISOFORM 3)</scope>
    <source>
        <strain>Czech II</strain>
        <tissue>Embryo</tissue>
        <tissue>Mammary tumor</tissue>
    </source>
</reference>
<reference key="3">
    <citation type="journal article" date="2010" name="Cell">
        <title>A tissue-specific atlas of mouse protein phosphorylation and expression.</title>
        <authorList>
            <person name="Huttlin E.L."/>
            <person name="Jedrychowski M.P."/>
            <person name="Elias J.E."/>
            <person name="Goswami T."/>
            <person name="Rad R."/>
            <person name="Beausoleil S.A."/>
            <person name="Villen J."/>
            <person name="Haas W."/>
            <person name="Sowa M.E."/>
            <person name="Gygi S.P."/>
        </authorList>
    </citation>
    <scope>PHOSPHORYLATION [LARGE SCALE ANALYSIS] AT SER-295</scope>
    <scope>IDENTIFICATION BY MASS SPECTROMETRY [LARGE SCALE ANALYSIS]</scope>
    <source>
        <tissue>Pancreas</tissue>
        <tissue>Spleen</tissue>
        <tissue>Testis</tissue>
    </source>
</reference>
<gene>
    <name evidence="1" type="primary">Znf598</name>
    <name evidence="8" type="synonym">Zfp598</name>
</gene>
<protein>
    <recommendedName>
        <fullName>E3 ubiquitin-protein ligase ZNF598</fullName>
        <ecNumber evidence="1">2.3.2.27</ecNumber>
    </recommendedName>
    <alternativeName>
        <fullName evidence="8">Zinc finger protein 598</fullName>
    </alternativeName>
</protein>
<accession>Q80YR4</accession>
<accession>Q6KAT0</accession>
<accession>Q8R3S1</accession>
<name>ZN598_MOUSE</name>
<organism>
    <name type="scientific">Mus musculus</name>
    <name type="common">Mouse</name>
    <dbReference type="NCBI Taxonomy" id="10090"/>
    <lineage>
        <taxon>Eukaryota</taxon>
        <taxon>Metazoa</taxon>
        <taxon>Chordata</taxon>
        <taxon>Craniata</taxon>
        <taxon>Vertebrata</taxon>
        <taxon>Euteleostomi</taxon>
        <taxon>Mammalia</taxon>
        <taxon>Eutheria</taxon>
        <taxon>Euarchontoglires</taxon>
        <taxon>Glires</taxon>
        <taxon>Rodentia</taxon>
        <taxon>Myomorpha</taxon>
        <taxon>Muroidea</taxon>
        <taxon>Muridae</taxon>
        <taxon>Murinae</taxon>
        <taxon>Mus</taxon>
        <taxon>Mus</taxon>
    </lineage>
</organism>
<keyword id="KW-0025">Alternative splicing</keyword>
<keyword id="KW-0963">Cytoplasm</keyword>
<keyword id="KW-0479">Metal-binding</keyword>
<keyword id="KW-0597">Phosphoprotein</keyword>
<keyword id="KW-1185">Reference proteome</keyword>
<keyword id="KW-0808">Transferase</keyword>
<keyword id="KW-0810">Translation regulation</keyword>
<keyword id="KW-0833">Ubl conjugation pathway</keyword>
<keyword id="KW-0862">Zinc</keyword>
<keyword id="KW-0863">Zinc-finger</keyword>
<proteinExistence type="evidence at protein level"/>
<feature type="chain" id="PRO_0000250569" description="E3 ubiquitin-protein ligase ZNF598">
    <location>
        <begin position="1"/>
        <end position="908"/>
    </location>
</feature>
<feature type="zinc finger region" description="RING-type" evidence="3">
    <location>
        <begin position="27"/>
        <end position="67"/>
    </location>
</feature>
<feature type="zinc finger region" description="C2H2-type" evidence="2">
    <location>
        <begin position="185"/>
        <end position="208"/>
    </location>
</feature>
<feature type="region of interest" description="Disordered" evidence="4">
    <location>
        <begin position="292"/>
        <end position="338"/>
    </location>
</feature>
<feature type="region of interest" description="Disordered" evidence="4">
    <location>
        <begin position="350"/>
        <end position="441"/>
    </location>
</feature>
<feature type="region of interest" description="Disordered" evidence="4">
    <location>
        <begin position="467"/>
        <end position="557"/>
    </location>
</feature>
<feature type="region of interest" description="Disordered" evidence="4">
    <location>
        <begin position="569"/>
        <end position="619"/>
    </location>
</feature>
<feature type="region of interest" description="Disordered" evidence="4">
    <location>
        <begin position="719"/>
        <end position="744"/>
    </location>
</feature>
<feature type="compositionally biased region" description="Low complexity" evidence="4">
    <location>
        <begin position="313"/>
        <end position="329"/>
    </location>
</feature>
<feature type="compositionally biased region" description="Basic and acidic residues" evidence="4">
    <location>
        <begin position="358"/>
        <end position="385"/>
    </location>
</feature>
<feature type="compositionally biased region" description="Low complexity" evidence="4">
    <location>
        <begin position="482"/>
        <end position="501"/>
    </location>
</feature>
<feature type="compositionally biased region" description="Basic residues" evidence="4">
    <location>
        <begin position="529"/>
        <end position="538"/>
    </location>
</feature>
<feature type="modified residue" description="Phosphoserine" evidence="9">
    <location>
        <position position="295"/>
    </location>
</feature>
<feature type="modified residue" description="Phosphotyrosine" evidence="1">
    <location>
        <position position="304"/>
    </location>
</feature>
<feature type="modified residue" description="Phosphoserine" evidence="1">
    <location>
        <position position="433"/>
    </location>
</feature>
<feature type="splice variant" id="VSP_020666" description="In isoform 3." evidence="6">
    <location>
        <begin position="333"/>
        <end position="335"/>
    </location>
</feature>
<feature type="splice variant" id="VSP_020667" description="In isoform 2." evidence="5">
    <location>
        <begin position="626"/>
        <end position="653"/>
    </location>
</feature>
<feature type="sequence conflict" description="In Ref. 2; AAH24690." evidence="7" ref="2">
    <original>L</original>
    <variation>M</variation>
    <location>
        <position position="600"/>
    </location>
</feature>
<sequence>MAAAAGAEGRRAALEAVAAPERGGGSCVLCCGDLEATALGRCDHPVCYRCSTKMRVLCEQRYCAVCREELRQVVFGKKLPAFALIPIHQLQHEKKYDIYFADGKVFALYRQLLQHECPRCPHLPPFSLFGDLEQHMRKQHELFCCKLCLKHLKIFTYERKWYSRKDLARHRMQGDPDDTSHRGHPLCKFCDERYLDNDELLKHLRRDHYFCHFCDSDGAQDYYSDYAYLREHFREKHFLCEEGRCSTEQFTHAFRTEIDLKAHKTACHSRSRAEARQNRQIDLQFSFAPRHSRRSEGVVSGEDYEEVDRYNRQGRAGRASGRGAQQNRRGSWRYKREEEDREVAAAIRASVAAQQQEETQRVEDREEGSRPKKEEAAARVPEEPRGHRRLPRAQGEGSGSKEASANGPVSQEAFPATGPGPVVALSNTLPPPSPELKEEDFPSLCASTSSCCTAVTPGSVGLALAYPGPPRGKNTFQEEDFPALVSSAPKPSSAPSSLISAWNSGCSKKGNLPTPGSQAVVGGSQPPRKAGKGSRGGRKGGPAPVDEEDSGGLTVQGLRSVPTTVAVSSLLAPATNQSSAKVGKKKKVGSEKPGATSSPLLPPDHTPKPSGAEQVLEAPLSKAEVPVTIVVNGHSEGSALVRSAPKEPPGLPRPLGPLPCPIPQEDFPALGGPCPPRMPPPPGFSTVVLLKGTPPPPPPPPGLVPPISKPPPGFSSLLPSSHSACAPSPTTTTTTTTTTKTPGLAPTPQAYLVPENFRERNLQLIQSIKDFLQSDEACFSKFKSHSGEFRQGMISAAQYYKSCRDLLGESFQKIFSELLALLPDTAKQQELLSAHTDFCSREKPPNSRSKRNKKNVWQTSTQQLGLDCCVCPTCQQVLAHGDVSSHQALHAARDDDFPSLQAIARIIT</sequence>
<comment type="function">
    <text evidence="1">E3 ubiquitin-protein ligase that plays a key role in the ribosome quality control (RQC), a pathway that takes place when a ribosome has stalled during translation, leading to degradation of nascent peptide chains. ZNF598 is activated when ribosomes are stalled within an mRNA following translation of prematurely polyadenylated mRNAs. Acts as a ribosome collision sensor: specifically recognizes and binds collided di-ribosome, which arises when a trailing ribosome encounters a slower leading ribosome, leading to terminally arrest translation. Following binding to colliding ribosomes, mediates monoubiquitination of 40S ribosomal proteins RPS10/eS10 and RPS3/uS3, and 'Lys-63'-linked polyubiquitination of RPS20/uS10. Polyubiquitination of RPS20/uS10 promotes recruitment of the RQT (ribosome quality control trigger) complex, which drives the disassembly of stalled ribosomes, followed by degradation of nascent peptides. E3 ubiquitin-protein ligase activity is dependent on the E2 ubiquitin-conjugating enzyme UBE2D3. Also acts as an adapter that recruits the 4EHP-GYF2 complex to mRNAs. Independently of its role in RQC, may also act as a negative regulator of interferon-stimulated gene (ISG) expression.</text>
</comment>
<comment type="catalytic activity">
    <reaction evidence="1">
        <text>S-ubiquitinyl-[E2 ubiquitin-conjugating enzyme]-L-cysteine + [acceptor protein]-L-lysine = [E2 ubiquitin-conjugating enzyme]-L-cysteine + N(6)-ubiquitinyl-[acceptor protein]-L-lysine.</text>
        <dbReference type="EC" id="2.3.2.27"/>
    </reaction>
</comment>
<comment type="pathway">
    <text evidence="1">Protein modification; protein ubiquitination.</text>
</comment>
<comment type="subunit">
    <text evidence="1">Interacts with the E2 ubiquitin-conjugating enzyme UBE2D3. Component of the 4EHP-GYF2 complex, at least composed of EIF4E2, GIGYF2 and ZNF598.</text>
</comment>
<comment type="subcellular location">
    <subcellularLocation>
        <location evidence="1">Cytoplasm</location>
        <location evidence="1">Cytosol</location>
    </subcellularLocation>
</comment>
<comment type="alternative products">
    <event type="alternative splicing"/>
    <isoform>
        <id>Q80YR4-1</id>
        <name>1</name>
        <sequence type="displayed"/>
    </isoform>
    <isoform>
        <id>Q80YR4-2</id>
        <name>2</name>
        <sequence type="described" ref="VSP_020667"/>
    </isoform>
    <isoform>
        <id>Q80YR4-3</id>
        <name>3</name>
        <sequence type="described" ref="VSP_020666"/>
    </isoform>
</comment>
<comment type="similarity">
    <text evidence="7">Belongs to the ZNF598/HEL2 family.</text>
</comment>
<comment type="sequence caution" evidence="7">
    <conflict type="erroneous initiation">
        <sequence resource="EMBL-CDS" id="BAD21377"/>
    </conflict>
</comment>
<evidence type="ECO:0000250" key="1">
    <source>
        <dbReference type="UniProtKB" id="Q86UK7"/>
    </source>
</evidence>
<evidence type="ECO:0000255" key="2">
    <source>
        <dbReference type="PROSITE-ProRule" id="PRU00042"/>
    </source>
</evidence>
<evidence type="ECO:0000255" key="3">
    <source>
        <dbReference type="PROSITE-ProRule" id="PRU00175"/>
    </source>
</evidence>
<evidence type="ECO:0000256" key="4">
    <source>
        <dbReference type="SAM" id="MobiDB-lite"/>
    </source>
</evidence>
<evidence type="ECO:0000303" key="5">
    <source>
    </source>
</evidence>
<evidence type="ECO:0000303" key="6">
    <source>
    </source>
</evidence>
<evidence type="ECO:0000305" key="7"/>
<evidence type="ECO:0000312" key="8">
    <source>
        <dbReference type="MGI" id="MGI:2670965"/>
    </source>
</evidence>
<evidence type="ECO:0007744" key="9">
    <source>
    </source>
</evidence>